<evidence type="ECO:0000269" key="1">
    <source>
    </source>
</evidence>
<evidence type="ECO:0000269" key="2">
    <source>
    </source>
</evidence>
<evidence type="ECO:0000269" key="3">
    <source>
    </source>
</evidence>
<evidence type="ECO:0000269" key="4">
    <source>
    </source>
</evidence>
<evidence type="ECO:0000269" key="5">
    <source>
    </source>
</evidence>
<evidence type="ECO:0000269" key="6">
    <source>
    </source>
</evidence>
<evidence type="ECO:0000269" key="7">
    <source>
    </source>
</evidence>
<evidence type="ECO:0000269" key="8">
    <source>
    </source>
</evidence>
<evidence type="ECO:0000269" key="9">
    <source ref="13"/>
</evidence>
<evidence type="ECO:0000269" key="10">
    <source ref="3"/>
</evidence>
<evidence type="ECO:0000269" key="11">
    <source ref="7"/>
</evidence>
<evidence type="ECO:0000269" key="12">
    <source ref="9"/>
</evidence>
<evidence type="ECO:0000303" key="13">
    <source>
    </source>
</evidence>
<evidence type="ECO:0000303" key="14">
    <source>
    </source>
</evidence>
<evidence type="ECO:0000303" key="15">
    <source ref="3"/>
</evidence>
<evidence type="ECO:0000305" key="16"/>
<evidence type="ECO:0000305" key="17">
    <source>
    </source>
</evidence>
<evidence type="ECO:0000305" key="18">
    <source>
    </source>
</evidence>
<evidence type="ECO:0000305" key="19">
    <source>
    </source>
</evidence>
<evidence type="ECO:0000305" key="20">
    <source>
    </source>
</evidence>
<evidence type="ECO:0000305" key="21">
    <source ref="13"/>
</evidence>
<evidence type="ECO:0000305" key="22">
    <source ref="7"/>
</evidence>
<evidence type="ECO:0000305" key="23">
    <source ref="9"/>
</evidence>
<evidence type="ECO:0007744" key="24">
    <source>
        <dbReference type="PDB" id="1HX9"/>
    </source>
</evidence>
<evidence type="ECO:0007744" key="25">
    <source>
        <dbReference type="PDB" id="1HXA"/>
    </source>
</evidence>
<evidence type="ECO:0007744" key="26">
    <source>
        <dbReference type="PDB" id="1HXC"/>
    </source>
</evidence>
<evidence type="ECO:0007744" key="27">
    <source>
        <dbReference type="PDB" id="1HXG"/>
    </source>
</evidence>
<evidence type="ECO:0007744" key="28">
    <source>
        <dbReference type="PDB" id="3LZ9"/>
    </source>
</evidence>
<evidence type="ECO:0007744" key="29">
    <source>
        <dbReference type="PDB" id="3M00"/>
    </source>
</evidence>
<evidence type="ECO:0007744" key="30">
    <source>
        <dbReference type="PDB" id="3M01"/>
    </source>
</evidence>
<evidence type="ECO:0007744" key="31">
    <source>
        <dbReference type="PDB" id="3M02"/>
    </source>
</evidence>
<evidence type="ECO:0007744" key="32">
    <source>
        <dbReference type="PDB" id="4DI5"/>
    </source>
</evidence>
<evidence type="ECO:0007744" key="33">
    <source>
        <dbReference type="PDB" id="4RNQ"/>
    </source>
</evidence>
<evidence type="ECO:0007744" key="34">
    <source>
        <dbReference type="PDB" id="5DHI"/>
    </source>
</evidence>
<evidence type="ECO:0007744" key="35">
    <source>
        <dbReference type="PDB" id="5DHK"/>
    </source>
</evidence>
<evidence type="ECO:0007744" key="36">
    <source>
        <dbReference type="PDB" id="5EAS"/>
    </source>
</evidence>
<evidence type="ECO:0007744" key="37">
    <source>
        <dbReference type="PDB" id="5EAT"/>
    </source>
</evidence>
<evidence type="ECO:0007744" key="38">
    <source>
        <dbReference type="PDB" id="5EAU"/>
    </source>
</evidence>
<evidence type="ECO:0007744" key="39">
    <source>
        <dbReference type="PDB" id="5IK0"/>
    </source>
</evidence>
<evidence type="ECO:0007744" key="40">
    <source>
        <dbReference type="PDB" id="5IK6"/>
    </source>
</evidence>
<evidence type="ECO:0007744" key="41">
    <source>
        <dbReference type="PDB" id="5IK9"/>
    </source>
</evidence>
<evidence type="ECO:0007744" key="42">
    <source>
        <dbReference type="PDB" id="5IKA"/>
    </source>
</evidence>
<evidence type="ECO:0007744" key="43">
    <source>
        <dbReference type="PDB" id="5IKH"/>
    </source>
</evidence>
<evidence type="ECO:0007744" key="44">
    <source>
        <dbReference type="PDB" id="5IL3"/>
    </source>
</evidence>
<evidence type="ECO:0007744" key="45">
    <source>
        <dbReference type="PDB" id="5IL8"/>
    </source>
</evidence>
<evidence type="ECO:0007744" key="46">
    <source>
        <dbReference type="PDB" id="5ILD"/>
    </source>
</evidence>
<evidence type="ECO:0007744" key="47">
    <source>
        <dbReference type="PDB" id="5ILH"/>
    </source>
</evidence>
<evidence type="ECO:0007744" key="48">
    <source>
        <dbReference type="PDB" id="5ILI"/>
    </source>
</evidence>
<evidence type="ECO:0007744" key="49">
    <source>
        <dbReference type="PDB" id="5ILJ"/>
    </source>
</evidence>
<evidence type="ECO:0007744" key="50">
    <source>
        <dbReference type="PDB" id="5ILK"/>
    </source>
</evidence>
<evidence type="ECO:0007744" key="51">
    <source>
        <dbReference type="PDB" id="5ILY"/>
    </source>
</evidence>
<evidence type="ECO:0007744" key="52">
    <source>
        <dbReference type="PDB" id="5ILZ"/>
    </source>
</evidence>
<evidence type="ECO:0007744" key="53">
    <source>
        <dbReference type="PDB" id="5IM1"/>
    </source>
</evidence>
<evidence type="ECO:0007829" key="54">
    <source>
        <dbReference type="PDB" id="5EAU"/>
    </source>
</evidence>
<evidence type="ECO:0007829" key="55">
    <source>
        <dbReference type="PDB" id="5IK0"/>
    </source>
</evidence>
<evidence type="ECO:0007829" key="56">
    <source>
        <dbReference type="PDB" id="5IKH"/>
    </source>
</evidence>
<evidence type="ECO:0007829" key="57">
    <source>
        <dbReference type="PDB" id="5IL3"/>
    </source>
</evidence>
<reference key="1">
    <citation type="journal article" date="1992" name="Proc. Natl. Acad. Sci. U.S.A.">
        <title>Gene family for an elicitor-induced sesquiterpene cyclase in tobacco.</title>
        <authorList>
            <person name="Facchini P.J."/>
            <person name="Chappell J."/>
        </authorList>
    </citation>
    <scope>NUCLEOTIDE SEQUENCE [GENOMIC DNA / MRNA]</scope>
    <scope>PROTEIN SEQUENCE OF 56-73</scope>
    <scope>INDUCTION</scope>
    <source>
        <strain>cv. NK 326</strain>
    </source>
</reference>
<reference key="2">
    <citation type="unpublished observations" date="2008-04">
        <authorList>
            <person name="O'Maille P.E."/>
        </authorList>
    </citation>
    <scope>SEQUENCE REVISION TO 35</scope>
</reference>
<reference key="3">
    <citation type="journal article" date="2000" name="J. Am. Chem. Soc.">
        <title>Demonstration of germacrene A as an intermediate in 5-epi-aristolochene synthase catalysis.</title>
        <authorList>
            <person name="Rising K.A."/>
            <person name="Starks C.M."/>
            <person name="Noel J.P."/>
            <person name="Chappell J."/>
        </authorList>
    </citation>
    <scope>FUNCTION</scope>
    <scope>CATALYTIC ACTIVITY</scope>
    <scope>BIOPHYSICOCHEMICAL PROPERTIES</scope>
    <scope>MUTAGENESIS OF TYR-520</scope>
</reference>
<reference key="4">
    <citation type="journal article" date="2006" name="Arch. Biochem. Biophys.">
        <title>Biosynthetic potential of sesquiterpene synthases: alternative products of tobacco 5-epi-aristolochene synthase.</title>
        <authorList>
            <person name="O'Maille P.E."/>
            <person name="Chappell J."/>
            <person name="Noel J.P."/>
        </authorList>
    </citation>
    <scope>FUNCTION</scope>
    <scope>CATALYTIC ACTIVITY</scope>
</reference>
<reference key="5">
    <citation type="journal article" date="2010" name="J. Am. Chem. Soc.">
        <title>Bisabolyl-derived sesquiterpenes from tobacco 5-epi-aristolochene synthase-catalyzed cyclization of (2Z,6E)-farnesyl diphosphate.</title>
        <authorList>
            <person name="Faraldos J.A."/>
            <person name="O'Maille P.E."/>
            <person name="Dellas N."/>
            <person name="Noel J.P."/>
            <person name="Coates R.M."/>
        </authorList>
    </citation>
    <scope>FUNCTION</scope>
    <scope>CATALYTIC ACTIVITY</scope>
    <scope>BIOPHYSICOCHEMICAL PROPERTIES</scope>
</reference>
<reference evidence="36 37 38" key="6">
    <citation type="journal article" date="1997" name="Science">
        <title>Structural basis for cyclic terpene biosynthesis by tobacco 5-epi-aristolochene synthase.</title>
        <authorList>
            <person name="Starks C.M."/>
            <person name="Back K."/>
            <person name="Chappell J."/>
            <person name="Noel J.P."/>
        </authorList>
    </citation>
    <scope>X-RAY CRYSTALLOGRAPHY (2.15 ANGSTROMS) IN COMPLEX WITH MAGNESIUM IONS AND FARNESYL DIPHOSPHATE ANALOG</scope>
    <scope>SEQUENCE REVISION</scope>
</reference>
<reference evidence="24 25 26 27" key="7">
    <citation type="submission" date="2001-01" db="PDB data bank">
        <title>Single active site mutations change the specificity of a sesquiterpene cyclase.</title>
        <authorList>
            <person name="Starks C.S."/>
            <person name="Rising K.A."/>
            <person name="Chappell J."/>
            <person name="Noel J.P."/>
        </authorList>
    </citation>
    <scope>X-RAY CRYSTALLOGRAPHY (2.25 ANGSTROMS) IN COMPLEX WITH MAGNESIUM IONS AND (2E,6E)-FARNESYL DIPHOSPHATE</scope>
</reference>
<reference evidence="28 29 30 31" key="8">
    <citation type="journal article" date="2010" name="ACS Chem. Biol.">
        <title>Structural elucidation of cisoid and transoid cyclization pathways of a sesquiterpene synthase using 2-fluorofarnesyl diphosphates.</title>
        <authorList>
            <person name="Noel J.P."/>
            <person name="Dellas N."/>
            <person name="Faraldos J.A."/>
            <person name="Zhao M."/>
            <person name="Hess B.A. Jr."/>
            <person name="Smentek L."/>
            <person name="Coates R.M."/>
            <person name="O'Maille P.E."/>
        </authorList>
    </citation>
    <scope>X-RAY CRYSTALLOGRAPHY (2.10 ANGSTROMS) IN COMPLEX WITH MAGNESIUM IONS AND FARNESYL DIPHOSPHATE</scope>
    <scope>FUNCTION</scope>
    <scope>MUTAGENESIS OF ALA-274; VAL-372; TYR-406 AND VAL-516</scope>
    <scope>CATALYTIC ACTIVITY</scope>
    <scope>BIOPHYSICOCHEMICAL PROPERTIES</scope>
</reference>
<reference evidence="32" key="9">
    <citation type="submission" date="2012-01" db="PDB data bank">
        <title>Co-crystal structure of WT 5-epi-Aristolochene synthase from Nicotiana tobaccum with geraniline.</title>
        <authorList>
            <person name="Noel J.P."/>
            <person name="Starks C."/>
            <person name="Crenshaw C.M."/>
        </authorList>
    </citation>
    <scope>X-RAY CRYSTALLOGRAPHY (2.30 ANGSTROMS) OF 14-548 IN COMPLEX WITH DIPHOSPHATE AND MAGNESIUM IONS</scope>
</reference>
<reference evidence="33" key="10">
    <citation type="journal article" date="2015" name="ACS Chem. Biol.">
        <title>Formation of a novel macrocyclic alkaloid from the unnatural farnesyl diphosphate analogue anilinogeranyl diphosphate by 5-epi-aristolochene synthase.</title>
        <authorList>
            <person name="Rising K.A."/>
            <person name="Crenshaw C.M."/>
            <person name="Koo H.J."/>
            <person name="Subramanian T."/>
            <person name="Chehade K.A.H."/>
            <person name="Starks C."/>
            <person name="Allen K.D."/>
            <person name="Andres D.A."/>
            <person name="Spielmann H.P."/>
            <person name="Noel J.P."/>
            <person name="Chappell J."/>
        </authorList>
    </citation>
    <scope>X-RAY CRYSTALLOGRAPHY (2.47 ANGSTROMS) IN COMPLEX WITH DIPHOSPHATE AND MAGNESIUM IONS</scope>
    <scope>CATALYTIC ACTIVITY</scope>
    <scope>ACTIVITY REGULATION</scope>
    <scope>BIOPHYSICOCHEMICAL PROPERTIES</scope>
</reference>
<reference evidence="34 35" key="11">
    <citation type="journal article" date="2015" name="ACS Chem. Biol.">
        <title>Mechanism-based post-translational modification and inactivation in terpene synthases.</title>
        <authorList>
            <person name="Kersten R.D."/>
            <person name="Diedrich J.K."/>
            <person name="Yates J.R. III"/>
            <person name="Noel J.P."/>
        </authorList>
    </citation>
    <scope>X-RAY CRYSTALLOGRAPHY (2.25 ANGSTROMS) OF 13-548 IN COMPLEX WITH MAGNESIUM IONS</scope>
    <scope>CATALYTIC ACTIVITY</scope>
    <scope>MUTAGENESIS OF TRP-273; VAL-277; TYR-404; LEU-407 AND LEU-512</scope>
    <scope>ACTIVITY REGULATION</scope>
</reference>
<reference evidence="39 40 41 42 43" key="12">
    <citation type="journal article" date="2016" name="J. Antibiot.">
        <title>Biosynthetic potential of sesquiterpene synthases: product profiles of Egyptian Henbane premnaspirodiene synthase and related mutants.</title>
        <authorList>
            <person name="Koo H.J."/>
            <person name="Vickery C.R."/>
            <person name="Xu Y."/>
            <person name="Louie G.V."/>
            <person name="O'Maille P.E."/>
            <person name="Bowman M."/>
            <person name="Nartey C.M."/>
            <person name="Burkart M.D."/>
            <person name="Noel J.P."/>
        </authorList>
    </citation>
    <scope>X-RAY CRYSTALLOGRAPHY (2.10 ANGSTROMS) IN COMPLEX WITH (2E,6E)-FARNESYL DIPHOSPHATE AND MAGNESIUM IONS</scope>
</reference>
<reference evidence="44 45 46 47 48 49 50 51 52 53" key="13">
    <citation type="submission" date="2016-03" db="PDB data bank">
        <title>Small-molecule buffer components can directly affect terpene-synthase activity by interacting with the substrate-binding site of the enzyme.</title>
        <authorList>
            <person name="Koo H.J."/>
            <person name="Louie G.V."/>
            <person name="Xu Y."/>
            <person name="Bowman M."/>
            <person name="Noel J.P."/>
        </authorList>
    </citation>
    <scope>X-RAY CRYSTALLOGRAPHY (1.85 ANGSTROMS) IN COMPLEX WITH DIPHOSPHATE AND MAGNESIUM IONS</scope>
</reference>
<name>5EAS_TOBAC</name>
<protein>
    <recommendedName>
        <fullName evidence="14 15">5-epi-aristolochene synthase</fullName>
        <shortName evidence="14 15">TEAS</shortName>
        <ecNumber evidence="2 3 5 6 10">4.2.3.61</ecNumber>
    </recommendedName>
    <alternativeName>
        <fullName evidence="13 14">(+)-2-epi-prezizaene synthase</fullName>
        <ecNumber evidence="3 4">4.2.3.226</ecNumber>
    </alternativeName>
    <alternativeName>
        <fullName evidence="13 14">(-)-alpha-cedrene synthase</fullName>
        <ecNumber evidence="3 4">4.2.3.227</ecNumber>
    </alternativeName>
</protein>
<comment type="function">
    <text evidence="2 3 4 10">Catalyzes the cyclization of trans,trans-farnesyl diphosphate (FPP) to the bicyclic intermediate 5-epi-aristolochene, initial step in the conversion of FPP to the sesquiterpenoid antifungal phytoalexin capsidiol (PubMed:16375847, PubMed:20175559, PubMed:20201526, Ref.3). Produces germacrene A as an enzyme-bound intermediate that is not released by the enzyme, but is further cyclized to produce the bicyclic 5-epi-aristolochene (PubMed:16375847, PubMed:20175559, Ref.3). Mediates, at low levels, the formation of 4-epi-eremophilene and premnaspirodiene from trans,trans-farnesyl diphosphate (PubMed:20175559). Also mediates the conversion of cis,trans-farnesyl diphosphate to cisoid minor products such as (+)-2-epi-prezizaene, (-)-alpha-cedrene and, to a lesser extent, (-)-beta-curcumene; also produces, at low levels, alpha-acoradiene and 4-epi-alpha-acoradiene, but barely nerolidol, alpha-bisabolol, epi-alpha-bisabolol and cis-farnesol (PubMed:20175559, PubMed:20201526).</text>
</comment>
<comment type="catalytic activity">
    <reaction evidence="2 3 5 6 10">
        <text>(2E,6E)-farnesyl diphosphate = (+)-5-epi-aristolochene + diphosphate</text>
        <dbReference type="Rhea" id="RHEA:28635"/>
        <dbReference type="ChEBI" id="CHEBI:23925"/>
        <dbReference type="ChEBI" id="CHEBI:33019"/>
        <dbReference type="ChEBI" id="CHEBI:175763"/>
        <dbReference type="EC" id="4.2.3.61"/>
    </reaction>
    <physiologicalReaction direction="left-to-right" evidence="2 3 5 6 10">
        <dbReference type="Rhea" id="RHEA:28636"/>
    </physiologicalReaction>
</comment>
<comment type="catalytic activity">
    <reaction evidence="3 4">
        <text>(2Z,6E)-farnesyl diphosphate = (+)-2-epi-prezizaene + diphosphate</text>
        <dbReference type="Rhea" id="RHEA:31415"/>
        <dbReference type="ChEBI" id="CHEBI:33019"/>
        <dbReference type="ChEBI" id="CHEBI:62762"/>
        <dbReference type="ChEBI" id="CHEBI:162247"/>
        <dbReference type="EC" id="4.2.3.226"/>
    </reaction>
    <physiologicalReaction direction="left-to-right" evidence="3 4">
        <dbReference type="Rhea" id="RHEA:31416"/>
    </physiologicalReaction>
</comment>
<comment type="catalytic activity">
    <reaction evidence="3 4">
        <text>(2Z,6E)-farnesyl diphosphate = (-)-alpha-cedrene + diphosphate</text>
        <dbReference type="Rhea" id="RHEA:31423"/>
        <dbReference type="ChEBI" id="CHEBI:10216"/>
        <dbReference type="ChEBI" id="CHEBI:33019"/>
        <dbReference type="ChEBI" id="CHEBI:162247"/>
        <dbReference type="EC" id="4.2.3.227"/>
    </reaction>
    <physiologicalReaction direction="left-to-right" evidence="3 4">
        <dbReference type="Rhea" id="RHEA:31424"/>
    </physiologicalReaction>
</comment>
<comment type="catalytic activity">
    <reaction evidence="3 4">
        <text>(2Z,6E)-farnesyl diphosphate = (-)-beta-curcumene + diphosphate</text>
        <dbReference type="Rhea" id="RHEA:31419"/>
        <dbReference type="ChEBI" id="CHEBI:33019"/>
        <dbReference type="ChEBI" id="CHEBI:62760"/>
        <dbReference type="ChEBI" id="CHEBI:162247"/>
    </reaction>
    <physiologicalReaction direction="left-to-right" evidence="3 4">
        <dbReference type="Rhea" id="RHEA:31420"/>
    </physiologicalReaction>
</comment>
<comment type="cofactor">
    <cofactor evidence="8">
        <name>Mg(2+)</name>
        <dbReference type="ChEBI" id="CHEBI:18420"/>
    </cofactor>
    <text evidence="8">Binds 3 Mg(2+) ions per subunit.</text>
</comment>
<comment type="activity regulation">
    <text evidence="5 6">Inhibited activity toward farnesyl diphosphate (FPP) by anilinogeranyl diphosphate (AGPP); AGPP undergoes a cyclization event leading to the formation of a novel macrocyclic paracyclophane alkaloid (PubMed:25897591). Repressed by sesquilavandulyl diphosphate (SPP) via the induction of self-alkyation (PubMed:26378620).</text>
</comment>
<comment type="biophysicochemical properties">
    <kinetics>
        <KM evidence="10">2.3 uM for 2-trans,6-trans-farnesyl diphosphate</KM>
        <KM evidence="3 4">8.4 uM for (2E,6E)-farnesyl diphosphate</KM>
        <KM evidence="3 4">14.03 uM for (2Z,6E)-farnesyl diphosphate</KM>
        <KM evidence="5">4.47 uM for farnesyl diphosphate</KM>
        <KM evidence="5">8.2 uM for anilinogeranyl diphosphate</KM>
        <text evidence="3 4 5">kcat is 2.5 min(-1) with (2E,6E)-farnesyl diphosphate as substrate (PubMed:20175559, PubMed:20201526). kcat is 5.71 min(-1) with (2Z,6E)-farnesyl diphosphate as substrate (PubMed:20175559, PubMed:20201526). kcat is 0.032 sec(-1) with farnesyl diphosphate as substrate (PubMed:25897591). kcat is 0.00012 sec(-1) with anilinogeranyl diphosphate as substrate (PubMed:25897591).</text>
    </kinetics>
</comment>
<comment type="pathway">
    <text evidence="16">Secondary metabolite biosynthesis; terpenoid biosynthesis.</text>
</comment>
<comment type="subunit">
    <text evidence="8">Monomer.</text>
</comment>
<comment type="subcellular location">
    <subcellularLocation>
        <location>Cytoplasm</location>
    </subcellularLocation>
</comment>
<comment type="induction">
    <text evidence="1">By fungal elicitor.</text>
</comment>
<comment type="domain">
    <text evidence="16">The Asp-Asp-Xaa-Xaa-Asp/Glu (DDXXD/E) motif is important for the catalytic activity, presumably through binding to Mg(2+).</text>
</comment>
<comment type="PTM">
    <text evidence="6">Self-alkylated at Tyr-520 in the presence of (2Z,6E)-farnesyl diphosphate ((Z,E)-FPP) (PubMed:26378620). Self-alkylated at Asp-444 at warm temperature (42 degrees Celsius) in the presence of (2E,6E)-farnesyl diphosphate ((E,E)-FPP) (PubMed:26378620).</text>
</comment>
<comment type="miscellaneous">
    <text>PubMed:1438319 indicates the presence of at least two genes coding for the same protein.</text>
</comment>
<comment type="similarity">
    <text evidence="16">Belongs to the terpene synthase family.</text>
</comment>
<organism>
    <name type="scientific">Nicotiana tabacum</name>
    <name type="common">Common tobacco</name>
    <dbReference type="NCBI Taxonomy" id="4097"/>
    <lineage>
        <taxon>Eukaryota</taxon>
        <taxon>Viridiplantae</taxon>
        <taxon>Streptophyta</taxon>
        <taxon>Embryophyta</taxon>
        <taxon>Tracheophyta</taxon>
        <taxon>Spermatophyta</taxon>
        <taxon>Magnoliopsida</taxon>
        <taxon>eudicotyledons</taxon>
        <taxon>Gunneridae</taxon>
        <taxon>Pentapetalae</taxon>
        <taxon>asterids</taxon>
        <taxon>lamiids</taxon>
        <taxon>Solanales</taxon>
        <taxon>Solanaceae</taxon>
        <taxon>Nicotianoideae</taxon>
        <taxon>Nicotianeae</taxon>
        <taxon>Nicotiana</taxon>
    </lineage>
</organism>
<sequence>MASAAVANYEEEIVRPVADFSPSLWGDQFLSFSIKNQVAEKYAKEIEALKEQTRNMLLATGMKLADTLNLIDTIERLGISYHFEKEIDDILDQIYNQNSNCNDLCTSALQFRLLRQHGFNISPEIFSKFQDENGKFKESLASDVLGLLNLYEASHVRTHADDILEDALAFSTIHLESAAPHLKSPLREQVTHALEQCLHKGVPRVETRFFISSIYDKEQSKNNVLLRFAKLDFNLLQMLHKQELAQVSRWWKDLDFVTTLPYARDRVVECYFWALGVYFEPQYSQARVMLVKTISMISIVDDTFDAYGTVKELEAYTDAIQRWDINEIDRLPDYMKISYKAILDLYKDYEKELSSAGRSHIVCHAIERMKEVVRNYNVESTWFIEGYTPPVSEYLSNALATTTYYYLATTSYLGMKSATEQDFEWLSKNPKILEASVIICRVIDDTATYEVEKSRGQIATGIECCMRDYGISTKEAMAKFQNMAETAWKDINEGLLRPTPVSTEFLTPILNLARIVEVTYIHNLDGYTHPEKVLKPHIINLLVDSIKI</sequence>
<gene>
    <name type="primary">EAS3</name>
</gene>
<gene>
    <name type="primary">EAS4</name>
</gene>
<accession>Q40577</accession>
<dbReference type="EC" id="4.2.3.61" evidence="2 3 5 6 10"/>
<dbReference type="EC" id="4.2.3.226" evidence="3 4"/>
<dbReference type="EC" id="4.2.3.227" evidence="3 4"/>
<dbReference type="EMBL" id="L04680">
    <property type="protein sequence ID" value="AAA19216.1"/>
    <property type="molecule type" value="Unassigned_RNA"/>
</dbReference>
<dbReference type="PIR" id="T03714">
    <property type="entry name" value="T03714"/>
</dbReference>
<dbReference type="PDB" id="1HX9">
    <property type="method" value="X-ray"/>
    <property type="resolution" value="3.50 A"/>
    <property type="chains" value="A=1-548"/>
</dbReference>
<dbReference type="PDB" id="1HXA">
    <property type="method" value="X-ray"/>
    <property type="resolution" value="2.32 A"/>
    <property type="chains" value="A=1-548"/>
</dbReference>
<dbReference type="PDB" id="1HXC">
    <property type="method" value="X-ray"/>
    <property type="resolution" value="2.25 A"/>
    <property type="chains" value="A=1-548"/>
</dbReference>
<dbReference type="PDB" id="1HXG">
    <property type="method" value="X-ray"/>
    <property type="resolution" value="2.90 A"/>
    <property type="chains" value="A=1-548"/>
</dbReference>
<dbReference type="PDB" id="3LZ9">
    <property type="method" value="X-ray"/>
    <property type="resolution" value="2.28 A"/>
    <property type="chains" value="A=1-548"/>
</dbReference>
<dbReference type="PDB" id="3M00">
    <property type="method" value="X-ray"/>
    <property type="resolution" value="2.10 A"/>
    <property type="chains" value="A=1-548"/>
</dbReference>
<dbReference type="PDB" id="3M01">
    <property type="method" value="X-ray"/>
    <property type="resolution" value="2.60 A"/>
    <property type="chains" value="A=1-548"/>
</dbReference>
<dbReference type="PDB" id="3M02">
    <property type="method" value="X-ray"/>
    <property type="resolution" value="2.50 A"/>
    <property type="chains" value="A=1-548"/>
</dbReference>
<dbReference type="PDB" id="4DI5">
    <property type="method" value="X-ray"/>
    <property type="resolution" value="2.30 A"/>
    <property type="chains" value="A=14-548"/>
</dbReference>
<dbReference type="PDB" id="4RNQ">
    <property type="method" value="X-ray"/>
    <property type="resolution" value="2.47 A"/>
    <property type="chains" value="A=1-548"/>
</dbReference>
<dbReference type="PDB" id="5DHI">
    <property type="method" value="X-ray"/>
    <property type="resolution" value="2.25 A"/>
    <property type="chains" value="A=13-548"/>
</dbReference>
<dbReference type="PDB" id="5DHK">
    <property type="method" value="X-ray"/>
    <property type="resolution" value="2.43 A"/>
    <property type="chains" value="A=13-548"/>
</dbReference>
<dbReference type="PDB" id="5EAS">
    <property type="method" value="X-ray"/>
    <property type="resolution" value="2.25 A"/>
    <property type="chains" value="A=1-548"/>
</dbReference>
<dbReference type="PDB" id="5EAT">
    <property type="method" value="X-ray"/>
    <property type="resolution" value="2.80 A"/>
    <property type="chains" value="A=1-548"/>
</dbReference>
<dbReference type="PDB" id="5EAU">
    <property type="method" value="X-ray"/>
    <property type="resolution" value="2.15 A"/>
    <property type="chains" value="A=1-548"/>
</dbReference>
<dbReference type="PDB" id="5IK0">
    <property type="method" value="X-ray"/>
    <property type="resolution" value="2.20 A"/>
    <property type="chains" value="A=1-548"/>
</dbReference>
<dbReference type="PDB" id="5IK6">
    <property type="method" value="X-ray"/>
    <property type="resolution" value="2.30 A"/>
    <property type="chains" value="A=1-548"/>
</dbReference>
<dbReference type="PDB" id="5IK9">
    <property type="method" value="X-ray"/>
    <property type="resolution" value="2.23 A"/>
    <property type="chains" value="A=1-548"/>
</dbReference>
<dbReference type="PDB" id="5IKA">
    <property type="method" value="X-ray"/>
    <property type="resolution" value="2.45 A"/>
    <property type="chains" value="A=1-548"/>
</dbReference>
<dbReference type="PDB" id="5IKH">
    <property type="method" value="X-ray"/>
    <property type="resolution" value="2.10 A"/>
    <property type="chains" value="A=1-548"/>
</dbReference>
<dbReference type="PDB" id="5IL3">
    <property type="method" value="X-ray"/>
    <property type="resolution" value="1.85 A"/>
    <property type="chains" value="A=1-548"/>
</dbReference>
<dbReference type="PDB" id="5IL8">
    <property type="method" value="X-ray"/>
    <property type="resolution" value="2.30 A"/>
    <property type="chains" value="A=1-548"/>
</dbReference>
<dbReference type="PDB" id="5ILD">
    <property type="method" value="X-ray"/>
    <property type="resolution" value="2.12 A"/>
    <property type="chains" value="A=1-548"/>
</dbReference>
<dbReference type="PDB" id="5ILH">
    <property type="method" value="X-ray"/>
    <property type="resolution" value="2.10 A"/>
    <property type="chains" value="A=1-548"/>
</dbReference>
<dbReference type="PDB" id="5ILI">
    <property type="method" value="X-ray"/>
    <property type="resolution" value="1.90 A"/>
    <property type="chains" value="A=1-548"/>
</dbReference>
<dbReference type="PDB" id="5ILJ">
    <property type="method" value="X-ray"/>
    <property type="resolution" value="2.05 A"/>
    <property type="chains" value="A=1-548"/>
</dbReference>
<dbReference type="PDB" id="5ILK">
    <property type="method" value="X-ray"/>
    <property type="resolution" value="2.35 A"/>
    <property type="chains" value="A=1-548"/>
</dbReference>
<dbReference type="PDB" id="5ILY">
    <property type="method" value="X-ray"/>
    <property type="resolution" value="2.45 A"/>
    <property type="chains" value="A=1-548"/>
</dbReference>
<dbReference type="PDB" id="5ILZ">
    <property type="method" value="X-ray"/>
    <property type="resolution" value="1.92 A"/>
    <property type="chains" value="A=1-548"/>
</dbReference>
<dbReference type="PDB" id="5IM1">
    <property type="method" value="X-ray"/>
    <property type="resolution" value="1.88 A"/>
    <property type="chains" value="A=1-548"/>
</dbReference>
<dbReference type="PDBsum" id="1HX9"/>
<dbReference type="PDBsum" id="1HXA"/>
<dbReference type="PDBsum" id="1HXC"/>
<dbReference type="PDBsum" id="1HXG"/>
<dbReference type="PDBsum" id="3LZ9"/>
<dbReference type="PDBsum" id="3M00"/>
<dbReference type="PDBsum" id="3M01"/>
<dbReference type="PDBsum" id="3M02"/>
<dbReference type="PDBsum" id="4DI5"/>
<dbReference type="PDBsum" id="4RNQ"/>
<dbReference type="PDBsum" id="5DHI"/>
<dbReference type="PDBsum" id="5DHK"/>
<dbReference type="PDBsum" id="5EAS"/>
<dbReference type="PDBsum" id="5EAT"/>
<dbReference type="PDBsum" id="5EAU"/>
<dbReference type="PDBsum" id="5IK0"/>
<dbReference type="PDBsum" id="5IK6"/>
<dbReference type="PDBsum" id="5IK9"/>
<dbReference type="PDBsum" id="5IKA"/>
<dbReference type="PDBsum" id="5IKH"/>
<dbReference type="PDBsum" id="5IL3"/>
<dbReference type="PDBsum" id="5IL8"/>
<dbReference type="PDBsum" id="5ILD"/>
<dbReference type="PDBsum" id="5ILH"/>
<dbReference type="PDBsum" id="5ILI"/>
<dbReference type="PDBsum" id="5ILJ"/>
<dbReference type="PDBsum" id="5ILK"/>
<dbReference type="PDBsum" id="5ILY"/>
<dbReference type="PDBsum" id="5ILZ"/>
<dbReference type="PDBsum" id="5IM1"/>
<dbReference type="SMR" id="Q40577"/>
<dbReference type="STRING" id="4097.Q40577"/>
<dbReference type="PaxDb" id="4097-Q40577"/>
<dbReference type="KEGG" id="ag:AAA19216"/>
<dbReference type="BioCyc" id="MetaCyc:EAS-MONOMER"/>
<dbReference type="BRENDA" id="4.2.3.61">
    <property type="organism ID" value="3645"/>
</dbReference>
<dbReference type="BRENDA" id="4.2.3.9">
    <property type="organism ID" value="3645"/>
</dbReference>
<dbReference type="UniPathway" id="UPA00213"/>
<dbReference type="EvolutionaryTrace" id="Q40577"/>
<dbReference type="Proteomes" id="UP000084051">
    <property type="component" value="Unplaced"/>
</dbReference>
<dbReference type="GO" id="GO:0005737">
    <property type="term" value="C:cytoplasm"/>
    <property type="evidence" value="ECO:0007669"/>
    <property type="project" value="UniProtKB-SubCell"/>
</dbReference>
<dbReference type="GO" id="GO:0102698">
    <property type="term" value="F:5-epi-aristolochene synthase activity"/>
    <property type="evidence" value="ECO:0000314"/>
    <property type="project" value="UniProtKB"/>
</dbReference>
<dbReference type="GO" id="GO:0000287">
    <property type="term" value="F:magnesium ion binding"/>
    <property type="evidence" value="ECO:0000314"/>
    <property type="project" value="UniProtKB"/>
</dbReference>
<dbReference type="GO" id="GO:0010333">
    <property type="term" value="F:terpene synthase activity"/>
    <property type="evidence" value="ECO:0007669"/>
    <property type="project" value="InterPro"/>
</dbReference>
<dbReference type="GO" id="GO:0016102">
    <property type="term" value="P:diterpenoid biosynthetic process"/>
    <property type="evidence" value="ECO:0007669"/>
    <property type="project" value="InterPro"/>
</dbReference>
<dbReference type="GO" id="GO:0051762">
    <property type="term" value="P:sesquiterpene biosynthetic process"/>
    <property type="evidence" value="ECO:0000314"/>
    <property type="project" value="UniProtKB"/>
</dbReference>
<dbReference type="CDD" id="cd00684">
    <property type="entry name" value="Terpene_cyclase_plant_C1"/>
    <property type="match status" value="1"/>
</dbReference>
<dbReference type="FunFam" id="1.10.600.10:FF:000007">
    <property type="entry name" value="Isoprene synthase, chloroplastic"/>
    <property type="match status" value="1"/>
</dbReference>
<dbReference type="FunFam" id="1.50.10.130:FF:000001">
    <property type="entry name" value="Isoprene synthase, chloroplastic"/>
    <property type="match status" value="1"/>
</dbReference>
<dbReference type="Gene3D" id="1.10.600.10">
    <property type="entry name" value="Farnesyl Diphosphate Synthase"/>
    <property type="match status" value="1"/>
</dbReference>
<dbReference type="Gene3D" id="1.50.10.130">
    <property type="entry name" value="Terpene synthase, N-terminal domain"/>
    <property type="match status" value="1"/>
</dbReference>
<dbReference type="InterPro" id="IPR008949">
    <property type="entry name" value="Isoprenoid_synthase_dom_sf"/>
</dbReference>
<dbReference type="InterPro" id="IPR044814">
    <property type="entry name" value="Terpene_cyclase_plant_C1"/>
</dbReference>
<dbReference type="InterPro" id="IPR001906">
    <property type="entry name" value="Terpene_synth_N"/>
</dbReference>
<dbReference type="InterPro" id="IPR036965">
    <property type="entry name" value="Terpene_synth_N_sf"/>
</dbReference>
<dbReference type="InterPro" id="IPR050148">
    <property type="entry name" value="Terpene_synthase-like"/>
</dbReference>
<dbReference type="InterPro" id="IPR005630">
    <property type="entry name" value="Terpene_synthase_metal-bd"/>
</dbReference>
<dbReference type="InterPro" id="IPR008930">
    <property type="entry name" value="Terpenoid_cyclase/PrenylTrfase"/>
</dbReference>
<dbReference type="PANTHER" id="PTHR31225:SF93">
    <property type="entry name" value="ALPHA-HUMULENE_(-)-(E)-BETA-CARYOPHYLLENE SYNTHASE"/>
    <property type="match status" value="1"/>
</dbReference>
<dbReference type="PANTHER" id="PTHR31225">
    <property type="entry name" value="OS04G0344100 PROTEIN-RELATED"/>
    <property type="match status" value="1"/>
</dbReference>
<dbReference type="Pfam" id="PF01397">
    <property type="entry name" value="Terpene_synth"/>
    <property type="match status" value="1"/>
</dbReference>
<dbReference type="Pfam" id="PF03936">
    <property type="entry name" value="Terpene_synth_C"/>
    <property type="match status" value="1"/>
</dbReference>
<dbReference type="SFLD" id="SFLDS00005">
    <property type="entry name" value="Isoprenoid_Synthase_Type_I"/>
    <property type="match status" value="1"/>
</dbReference>
<dbReference type="SFLD" id="SFLDG01604">
    <property type="entry name" value="Terpene_Cyclase_Like_1_C_Termi"/>
    <property type="match status" value="1"/>
</dbReference>
<dbReference type="SFLD" id="SFLDG01014">
    <property type="entry name" value="Terpene_Cyclase_Like_1_N-term"/>
    <property type="match status" value="1"/>
</dbReference>
<dbReference type="SUPFAM" id="SSF48239">
    <property type="entry name" value="Terpenoid cyclases/Protein prenyltransferases"/>
    <property type="match status" value="1"/>
</dbReference>
<dbReference type="SUPFAM" id="SSF48576">
    <property type="entry name" value="Terpenoid synthases"/>
    <property type="match status" value="1"/>
</dbReference>
<feature type="chain" id="PRO_0000186438" description="5-epi-aristolochene synthase">
    <location>
        <begin position="1"/>
        <end position="548"/>
    </location>
</feature>
<feature type="short sequence motif" description="DDXXD motif" evidence="16">
    <location>
        <begin position="301"/>
        <end position="305"/>
    </location>
</feature>
<feature type="binding site" evidence="3 7 18 20 21 23 28 29 30 31 32 33 37 38 39 40 41 42 43 45 46 51">
    <location>
        <position position="264"/>
    </location>
    <ligand>
        <name>(2E,6E)-farnesyl diphosphate</name>
        <dbReference type="ChEBI" id="CHEBI:175763"/>
    </ligand>
</feature>
<feature type="binding site" evidence="7 11 17 18 20 21 24 26 28 30 31 33 38 39 41 44 45">
    <location>
        <position position="301"/>
    </location>
    <ligand>
        <name>(2E,6E)-farnesyl diphosphate</name>
        <dbReference type="ChEBI" id="CHEBI:175763"/>
    </ligand>
</feature>
<feature type="binding site" evidence="3 5 6 7 8 9 11 12 24 25 27 28 29 30 31 32 33 34 35 36 37 38 39 40 41 42 43 44 46 48 51">
    <location>
        <position position="301"/>
    </location>
    <ligand>
        <name>Mg(2+)</name>
        <dbReference type="ChEBI" id="CHEBI:18420"/>
        <label>1</label>
    </ligand>
</feature>
<feature type="binding site" evidence="3 5 6 7 8 28 29 30 31 33 34 37 39 41 42">
    <location>
        <position position="301"/>
    </location>
    <ligand>
        <name>Mg(2+)</name>
        <dbReference type="ChEBI" id="CHEBI:18420"/>
        <label>2</label>
    </ligand>
</feature>
<feature type="binding site" evidence="3 7 18 20 28 29 33 38 39 41">
    <location>
        <position position="305"/>
    </location>
    <ligand>
        <name>(2E,6E)-farnesyl diphosphate</name>
        <dbReference type="ChEBI" id="CHEBI:175763"/>
    </ligand>
</feature>
<feature type="binding site" evidence="3 5 6 7 8 9 11 12 24 25 27 28 29 30 31 32 33 34 35 36 37 38 39 40 41 42 43 44 46 48 51">
    <location>
        <position position="305"/>
    </location>
    <ligand>
        <name>Mg(2+)</name>
        <dbReference type="ChEBI" id="CHEBI:18420"/>
        <label>1</label>
    </ligand>
</feature>
<feature type="binding site" evidence="3 5 6 7 8 25 28 29 30 31 33 34 35 37 39 41 42">
    <location>
        <position position="305"/>
    </location>
    <ligand>
        <name>Mg(2+)</name>
        <dbReference type="ChEBI" id="CHEBI:18420"/>
        <label>2</label>
    </ligand>
</feature>
<feature type="binding site" evidence="7 17 18 19 21 22 23 25 26 31 32 33 39 40 42 44 47 48 51">
    <location>
        <position position="441"/>
    </location>
    <ligand>
        <name>(2E,6E)-farnesyl diphosphate</name>
        <dbReference type="ChEBI" id="CHEBI:175763"/>
    </ligand>
</feature>
<feature type="binding site" evidence="3 7 18 20 21 22 23 25 28 29 31 32 33 37 39 41 44 47 51">
    <location>
        <position position="444"/>
    </location>
    <ligand>
        <name>(2E,6E)-farnesyl diphosphate</name>
        <dbReference type="ChEBI" id="CHEBI:175763"/>
    </ligand>
</feature>
<feature type="binding site" evidence="3 5 6 7 8 9 11 12 24 25 28 29 30 31 32 33 34 36 37 38 39 40 41 42 43 44 46 48 51">
    <location>
        <position position="444"/>
    </location>
    <ligand>
        <name>Mg(2+)</name>
        <dbReference type="ChEBI" id="CHEBI:18420"/>
        <label>3</label>
    </ligand>
</feature>
<feature type="binding site" evidence="3 5 7 8 9 12 31 32 33 36 37 43 46">
    <location>
        <position position="445"/>
    </location>
    <ligand>
        <name>Mg(2+)</name>
        <dbReference type="ChEBI" id="CHEBI:18420"/>
        <label>3</label>
    </ligand>
</feature>
<feature type="binding site" evidence="3 5 6 7 8 9 11 12 24 25 28 29 30 31 32 33 34 36 37 38 41 42 43 46 48 51">
    <location>
        <position position="448"/>
    </location>
    <ligand>
        <name>Mg(2+)</name>
        <dbReference type="ChEBI" id="CHEBI:18420"/>
        <label>3</label>
    </ligand>
</feature>
<feature type="binding site" evidence="3 5 6 7 8 9 11 12 24 25 28 29 30 31 32 33 34 36 37 38 39 40 41 42 43 44 46 48 51">
    <location>
        <position position="452"/>
    </location>
    <ligand>
        <name>Mg(2+)</name>
        <dbReference type="ChEBI" id="CHEBI:18420"/>
        <label>3</label>
    </ligand>
</feature>
<feature type="mutagenesis site" description="Catalyzes the conversion of (2E,6E)-farnesyl diphosphate to beta-farnesene instead of (+)-5-epi-aristolochene and triggers self-alkyation of D-444 and Y-520 leading to enzyme inactivation." evidence="6">
    <original>W</original>
    <variation>C</variation>
    <variation>E</variation>
    <variation>F</variation>
    <location>
        <position position="273"/>
    </location>
</feature>
<feature type="mutagenesis site" description="Relaxed product specificity leading to equal amounts production of 5-epi-aristolochene, 4-epi-eremophilene and premnaspirodiene with cis,trans-farnesyl diphosphate as substrate; when associated with I-372; L-406 and I-516." evidence="3">
    <original>A</original>
    <variation>T</variation>
    <location>
        <position position="274"/>
    </location>
</feature>
<feature type="mutagenesis site" description="Catalyzes the conversion of (2E,6E)-farnesyl diphosphate to (+)-5-epi-aristolochene and triggers self-alkyation of D-444 leading to enzyme inactivation." evidence="6">
    <original>V</original>
    <variation>L</variation>
    <location>
        <position position="277"/>
    </location>
</feature>
<feature type="mutagenesis site" description="Relaxed product specificity leading to equal amounts production of 5-epi-aristolochene, 4-epi-eremophilene and premnaspirodiene with cis,trans-farnesyl diphosphate as substrate; when associated with T-274; L-406 and I-516." evidence="3">
    <original>V</original>
    <variation>I</variation>
    <location>
        <position position="372"/>
    </location>
</feature>
<feature type="mutagenesis site" description="Catalyzes the conversion of (2E,6E)-farnesyl diphosphate to an unknown sesquiterpene instead of (+)-5-epi-aristolochene and triggers self-alkyation of D-444 and Y-520 leading to enzyme inactivation." evidence="6">
    <original>Y</original>
    <variation>C</variation>
    <location>
        <position position="404"/>
    </location>
</feature>
<feature type="mutagenesis site" description="Catalyzes the conversion of (2E,6E)-farnesyl diphosphate to (+)-5-epi-aristolochene and triggers self-alkyation of D-444 and Y-520 leading to enzyme inactivation." evidence="6">
    <original>Y</original>
    <variation>F</variation>
    <location>
        <position position="404"/>
    </location>
</feature>
<feature type="mutagenesis site" description="Relaxed product specificity leading to equal amounts production of 5-epi-aristolochene, 4-epi-eremophilene and premnaspirodiene with cis,trans-farnesyl diphosphate as substrate; when associated with T-274; I-372 and I-516." evidence="3">
    <original>Y</original>
    <variation>L</variation>
    <location>
        <position position="406"/>
    </location>
</feature>
<feature type="mutagenesis site" description="Catalyzes the conversion of (2E,6E)-farnesyl diphosphate to (+)-5-epi-aristolochene and triggers self-alkyation of D-444 and Y-520 leading to enzyme inactivation." evidence="6">
    <original>L</original>
    <variation>I</variation>
    <location>
        <position position="407"/>
    </location>
</feature>
<feature type="mutagenesis site" description="Catalyzes the conversion of (2E,6E)-farnesyl diphosphate to (+)-5-epi-aristolochene and triggers self-alkyation of D-444 leading to enzyme inactivation." evidence="6">
    <original>L</original>
    <variation>P</variation>
    <location>
        <position position="407"/>
    </location>
</feature>
<feature type="mutagenesis site" description="Catalyzes the conversion of (2E,6E)-farnesyl diphosphate to (+)-5-epi-aristolochene and triggers self-alkyation of D-444 leading to enzyme inactivation." evidence="6">
    <original>L</original>
    <variation>I</variation>
    <location>
        <position position="512"/>
    </location>
</feature>
<feature type="mutagenesis site" description="Relaxed product specificity leading to equal amounts production of 5-epi-aristolochene, 4-epi-eremophilene and premnaspirodiene with cis,trans-farnesyl diphosphate as substrate; when associated with T-274; I-372 and L-406." evidence="3">
    <original>V</original>
    <variation>I</variation>
    <location>
        <position position="516"/>
    </location>
</feature>
<feature type="mutagenesis site" description="Loss of production of aristolochene, and accumulation of the intermediate germacrene A." evidence="10">
    <original>Y</original>
    <variation>F</variation>
    <location>
        <position position="520"/>
    </location>
</feature>
<feature type="sequence conflict" description="In Ref. 1; AAA19216." evidence="16" ref="1">
    <original>K</original>
    <variation>D</variation>
    <location>
        <position position="35"/>
    </location>
</feature>
<feature type="sequence conflict" description="In Ref. 1; AA sequence." evidence="16" ref="1">
    <original>Y</original>
    <variation>YIY</variation>
    <location>
        <position position="42"/>
    </location>
</feature>
<feature type="sequence conflict" description="In Ref. 1; AAA19216." evidence="16" ref="1">
    <original>K</original>
    <variation>Q</variation>
    <location>
        <position position="44"/>
    </location>
</feature>
<feature type="sequence conflict" description="In Ref. 1; AAA19216." evidence="16" ref="1">
    <original>N</original>
    <variation>S</variation>
    <location>
        <position position="55"/>
    </location>
</feature>
<feature type="sequence conflict" description="In Ref. 1; AAA19216." evidence="16" ref="1">
    <original>M</original>
    <variation>R</variation>
    <location>
        <position position="62"/>
    </location>
</feature>
<feature type="sequence conflict" description="In Ref. 1; AAA19216." evidence="16" ref="1">
    <original>T</original>
    <variation>I</variation>
    <location>
        <position position="73"/>
    </location>
</feature>
<feature type="sequence conflict" description="In Ref. 1; AAA19216." evidence="16" ref="1">
    <original>D</original>
    <variation>E</variation>
    <location>
        <position position="89"/>
    </location>
</feature>
<feature type="sequence conflict" description="In Ref. 1; AAA19216." evidence="16" ref="1">
    <original>T</original>
    <variation>M</variation>
    <location>
        <position position="388"/>
    </location>
</feature>
<feature type="turn" evidence="57">
    <location>
        <begin position="26"/>
        <end position="29"/>
    </location>
</feature>
<feature type="helix" evidence="57">
    <location>
        <begin position="36"/>
        <end position="57"/>
    </location>
</feature>
<feature type="helix" evidence="57">
    <location>
        <begin position="64"/>
        <end position="76"/>
    </location>
</feature>
<feature type="helix" evidence="57">
    <location>
        <begin position="80"/>
        <end position="82"/>
    </location>
</feature>
<feature type="helix" evidence="57">
    <location>
        <begin position="84"/>
        <end position="97"/>
    </location>
</feature>
<feature type="helix" evidence="57">
    <location>
        <begin position="104"/>
        <end position="116"/>
    </location>
</feature>
<feature type="helix" evidence="57">
    <location>
        <begin position="123"/>
        <end position="129"/>
    </location>
</feature>
<feature type="strand" evidence="54">
    <location>
        <begin position="134"/>
        <end position="136"/>
    </location>
</feature>
<feature type="helix" evidence="57">
    <location>
        <begin position="138"/>
        <end position="142"/>
    </location>
</feature>
<feature type="helix" evidence="57">
    <location>
        <begin position="144"/>
        <end position="154"/>
    </location>
</feature>
<feature type="helix" evidence="57">
    <location>
        <begin position="162"/>
        <end position="164"/>
    </location>
</feature>
<feature type="helix" evidence="57">
    <location>
        <begin position="167"/>
        <end position="178"/>
    </location>
</feature>
<feature type="helix" evidence="57">
    <location>
        <begin position="179"/>
        <end position="181"/>
    </location>
</feature>
<feature type="helix" evidence="57">
    <location>
        <begin position="186"/>
        <end position="195"/>
    </location>
</feature>
<feature type="helix" evidence="57">
    <location>
        <begin position="203"/>
        <end position="213"/>
    </location>
</feature>
<feature type="helix" evidence="57">
    <location>
        <begin position="215"/>
        <end position="217"/>
    </location>
</feature>
<feature type="helix" evidence="57">
    <location>
        <begin position="223"/>
        <end position="252"/>
    </location>
</feature>
<feature type="turn" evidence="55">
    <location>
        <begin position="253"/>
        <end position="255"/>
    </location>
</feature>
<feature type="helix" evidence="57">
    <location>
        <begin position="256"/>
        <end position="259"/>
    </location>
</feature>
<feature type="helix" evidence="57">
    <location>
        <begin position="267"/>
        <end position="277"/>
    </location>
</feature>
<feature type="helix" evidence="57">
    <location>
        <begin position="281"/>
        <end position="283"/>
    </location>
</feature>
<feature type="helix" evidence="57">
    <location>
        <begin position="284"/>
        <end position="306"/>
    </location>
</feature>
<feature type="helix" evidence="57">
    <location>
        <begin position="310"/>
        <end position="322"/>
    </location>
</feature>
<feature type="helix" evidence="57">
    <location>
        <begin position="325"/>
        <end position="330"/>
    </location>
</feature>
<feature type="helix" evidence="57">
    <location>
        <begin position="333"/>
        <end position="352"/>
    </location>
</feature>
<feature type="turn" evidence="57">
    <location>
        <begin position="353"/>
        <end position="357"/>
    </location>
</feature>
<feature type="helix" evidence="57">
    <location>
        <begin position="359"/>
        <end position="361"/>
    </location>
</feature>
<feature type="helix" evidence="57">
    <location>
        <begin position="362"/>
        <end position="385"/>
    </location>
</feature>
<feature type="helix" evidence="57">
    <location>
        <begin position="391"/>
        <end position="398"/>
    </location>
</feature>
<feature type="helix" evidence="57">
    <location>
        <begin position="400"/>
        <end position="402"/>
    </location>
</feature>
<feature type="helix" evidence="57">
    <location>
        <begin position="404"/>
        <end position="412"/>
    </location>
</feature>
<feature type="helix" evidence="57">
    <location>
        <begin position="420"/>
        <end position="427"/>
    </location>
</feature>
<feature type="helix" evidence="57">
    <location>
        <begin position="431"/>
        <end position="454"/>
    </location>
</feature>
<feature type="helix" evidence="57">
    <location>
        <begin position="461"/>
        <end position="469"/>
    </location>
</feature>
<feature type="helix" evidence="57">
    <location>
        <begin position="473"/>
        <end position="494"/>
    </location>
</feature>
<feature type="strand" evidence="57">
    <location>
        <begin position="496"/>
        <end position="498"/>
    </location>
</feature>
<feature type="helix" evidence="57">
    <location>
        <begin position="503"/>
        <end position="505"/>
    </location>
</feature>
<feature type="helix" evidence="57">
    <location>
        <begin position="507"/>
        <end position="519"/>
    </location>
</feature>
<feature type="turn" evidence="57">
    <location>
        <begin position="520"/>
        <end position="522"/>
    </location>
</feature>
<feature type="strand" evidence="56">
    <location>
        <begin position="523"/>
        <end position="525"/>
    </location>
</feature>
<feature type="turn" evidence="57">
    <location>
        <begin position="526"/>
        <end position="528"/>
    </location>
</feature>
<feature type="turn" evidence="57">
    <location>
        <begin position="530"/>
        <end position="533"/>
    </location>
</feature>
<feature type="helix" evidence="57">
    <location>
        <begin position="534"/>
        <end position="542"/>
    </location>
</feature>
<keyword id="KW-0002">3D-structure</keyword>
<keyword id="KW-0963">Cytoplasm</keyword>
<keyword id="KW-0903">Direct protein sequencing</keyword>
<keyword id="KW-0456">Lyase</keyword>
<keyword id="KW-0460">Magnesium</keyword>
<keyword id="KW-0479">Metal-binding</keyword>
<keyword id="KW-1185">Reference proteome</keyword>
<proteinExistence type="evidence at protein level"/>